<keyword id="KW-0396">Initiation factor</keyword>
<keyword id="KW-0648">Protein biosynthesis</keyword>
<keyword id="KW-1185">Reference proteome</keyword>
<keyword id="KW-0694">RNA-binding</keyword>
<accession>Q973G0</accession>
<organism>
    <name type="scientific">Sulfurisphaera tokodaii (strain DSM 16993 / JCM 10545 / NBRC 100140 / 7)</name>
    <name type="common">Sulfolobus tokodaii</name>
    <dbReference type="NCBI Taxonomy" id="273063"/>
    <lineage>
        <taxon>Archaea</taxon>
        <taxon>Thermoproteota</taxon>
        <taxon>Thermoprotei</taxon>
        <taxon>Sulfolobales</taxon>
        <taxon>Sulfolobaceae</taxon>
        <taxon>Sulfurisphaera</taxon>
    </lineage>
</organism>
<feature type="chain" id="PRO_0000137403" description="Translation initiation factor 2 subunit alpha">
    <location>
        <begin position="1"/>
        <end position="263"/>
    </location>
</feature>
<feature type="domain" description="S1 motif" evidence="1">
    <location>
        <begin position="12"/>
        <end position="83"/>
    </location>
</feature>
<name>IF2A_SULTO</name>
<sequence length="263" mass="30222">MIYNKNPIPTEGEILIATVKQIFDYGSYVTLDEYGNLQAFLPWSEISSRWVKNIRDVIKEGRKIVVKVIRVDKRKGTIDVSLKKVTEDEKRKKMSQWKKIQKVDKILEIVSQKINKTEKEGWEQVAWKLEDKYGDAYDALVKAVKEGDSILKNAGVPEVWIKPLMEEIGKHIEEKRVKKSEIVTLRSSDPAGIEKIRKVLGAAVEIAENADVDIKIYTIGAPRYRIDIIGTDPKLLSKVMTEILDNIREISKEEKVEFNVVRK</sequence>
<evidence type="ECO:0000255" key="1">
    <source>
        <dbReference type="HAMAP-Rule" id="MF_00231"/>
    </source>
</evidence>
<protein>
    <recommendedName>
        <fullName evidence="1">Translation initiation factor 2 subunit alpha</fullName>
    </recommendedName>
    <alternativeName>
        <fullName evidence="1">aIF2-alpha</fullName>
    </alternativeName>
    <alternativeName>
        <fullName evidence="1">eIF-2-alpha</fullName>
    </alternativeName>
</protein>
<reference key="1">
    <citation type="journal article" date="2001" name="DNA Res.">
        <title>Complete genome sequence of an aerobic thermoacidophilic Crenarchaeon, Sulfolobus tokodaii strain7.</title>
        <authorList>
            <person name="Kawarabayasi Y."/>
            <person name="Hino Y."/>
            <person name="Horikawa H."/>
            <person name="Jin-no K."/>
            <person name="Takahashi M."/>
            <person name="Sekine M."/>
            <person name="Baba S."/>
            <person name="Ankai A."/>
            <person name="Kosugi H."/>
            <person name="Hosoyama A."/>
            <person name="Fukui S."/>
            <person name="Nagai Y."/>
            <person name="Nishijima K."/>
            <person name="Otsuka R."/>
            <person name="Nakazawa H."/>
            <person name="Takamiya M."/>
            <person name="Kato Y."/>
            <person name="Yoshizawa T."/>
            <person name="Tanaka T."/>
            <person name="Kudoh Y."/>
            <person name="Yamazaki J."/>
            <person name="Kushida N."/>
            <person name="Oguchi A."/>
            <person name="Aoki K."/>
            <person name="Masuda S."/>
            <person name="Yanagii M."/>
            <person name="Nishimura M."/>
            <person name="Yamagishi A."/>
            <person name="Oshima T."/>
            <person name="Kikuchi H."/>
        </authorList>
    </citation>
    <scope>NUCLEOTIDE SEQUENCE [LARGE SCALE GENOMIC DNA]</scope>
    <source>
        <strain>DSM 16993 / JCM 10545 / NBRC 100140 / 7</strain>
    </source>
</reference>
<proteinExistence type="inferred from homology"/>
<dbReference type="EMBL" id="BA000023">
    <property type="protein sequence ID" value="BAB65953.1"/>
    <property type="molecule type" value="Genomic_DNA"/>
</dbReference>
<dbReference type="RefSeq" id="WP_010978935.1">
    <property type="nucleotide sequence ID" value="NC_003106.2"/>
</dbReference>
<dbReference type="SMR" id="Q973G0"/>
<dbReference type="STRING" id="273063.STK_09410"/>
<dbReference type="GeneID" id="1458904"/>
<dbReference type="KEGG" id="sto:STK_09410"/>
<dbReference type="PATRIC" id="fig|273063.9.peg.1051"/>
<dbReference type="eggNOG" id="arCOG04107">
    <property type="taxonomic scope" value="Archaea"/>
</dbReference>
<dbReference type="OrthoDB" id="84794at2157"/>
<dbReference type="Proteomes" id="UP000001015">
    <property type="component" value="Chromosome"/>
</dbReference>
<dbReference type="GO" id="GO:0043022">
    <property type="term" value="F:ribosome binding"/>
    <property type="evidence" value="ECO:0007669"/>
    <property type="project" value="TreeGrafter"/>
</dbReference>
<dbReference type="GO" id="GO:0003723">
    <property type="term" value="F:RNA binding"/>
    <property type="evidence" value="ECO:0007669"/>
    <property type="project" value="UniProtKB-UniRule"/>
</dbReference>
<dbReference type="GO" id="GO:0003743">
    <property type="term" value="F:translation initiation factor activity"/>
    <property type="evidence" value="ECO:0007669"/>
    <property type="project" value="UniProtKB-UniRule"/>
</dbReference>
<dbReference type="CDD" id="cd04452">
    <property type="entry name" value="S1_IF2_alpha"/>
    <property type="match status" value="1"/>
</dbReference>
<dbReference type="FunFam" id="2.40.50.140:FF:000015">
    <property type="entry name" value="Eukaryotic translation initiation factor 2 subunit alpha"/>
    <property type="match status" value="1"/>
</dbReference>
<dbReference type="Gene3D" id="3.30.70.1130">
    <property type="entry name" value="EIF_2_alpha"/>
    <property type="match status" value="1"/>
</dbReference>
<dbReference type="Gene3D" id="2.40.50.140">
    <property type="entry name" value="Nucleic acid-binding proteins"/>
    <property type="match status" value="1"/>
</dbReference>
<dbReference type="Gene3D" id="1.10.150.190">
    <property type="entry name" value="Translation initiation factor 2, subunit 1, domain 2"/>
    <property type="match status" value="1"/>
</dbReference>
<dbReference type="HAMAP" id="MF_00231">
    <property type="entry name" value="eIF_2_alpha"/>
    <property type="match status" value="1"/>
</dbReference>
<dbReference type="InterPro" id="IPR012340">
    <property type="entry name" value="NA-bd_OB-fold"/>
</dbReference>
<dbReference type="InterPro" id="IPR003029">
    <property type="entry name" value="S1_domain"/>
</dbReference>
<dbReference type="InterPro" id="IPR044126">
    <property type="entry name" value="S1_IF2_alpha"/>
</dbReference>
<dbReference type="InterPro" id="IPR022964">
    <property type="entry name" value="TIF2_asu_arc"/>
</dbReference>
<dbReference type="InterPro" id="IPR024055">
    <property type="entry name" value="TIF2_asu_C"/>
</dbReference>
<dbReference type="InterPro" id="IPR024054">
    <property type="entry name" value="TIF2_asu_middle_sf"/>
</dbReference>
<dbReference type="InterPro" id="IPR011488">
    <property type="entry name" value="TIF_2_asu"/>
</dbReference>
<dbReference type="NCBIfam" id="NF003062">
    <property type="entry name" value="PRK03987.1-1"/>
    <property type="match status" value="1"/>
</dbReference>
<dbReference type="PANTHER" id="PTHR10602">
    <property type="entry name" value="EUKARYOTIC TRANSLATION INITIATION FACTOR 2 SUBUNIT 1"/>
    <property type="match status" value="1"/>
</dbReference>
<dbReference type="PANTHER" id="PTHR10602:SF0">
    <property type="entry name" value="EUKARYOTIC TRANSLATION INITIATION FACTOR 2 SUBUNIT 1"/>
    <property type="match status" value="1"/>
</dbReference>
<dbReference type="Pfam" id="PF07541">
    <property type="entry name" value="EIF_2_alpha"/>
    <property type="match status" value="1"/>
</dbReference>
<dbReference type="Pfam" id="PF00575">
    <property type="entry name" value="S1"/>
    <property type="match status" value="1"/>
</dbReference>
<dbReference type="SMART" id="SM00316">
    <property type="entry name" value="S1"/>
    <property type="match status" value="1"/>
</dbReference>
<dbReference type="SUPFAM" id="SSF110993">
    <property type="entry name" value="eIF-2-alpha, C-terminal domain"/>
    <property type="match status" value="1"/>
</dbReference>
<dbReference type="SUPFAM" id="SSF116742">
    <property type="entry name" value="eIF2alpha middle domain-like"/>
    <property type="match status" value="1"/>
</dbReference>
<dbReference type="SUPFAM" id="SSF50249">
    <property type="entry name" value="Nucleic acid-binding proteins"/>
    <property type="match status" value="1"/>
</dbReference>
<dbReference type="PROSITE" id="PS50126">
    <property type="entry name" value="S1"/>
    <property type="match status" value="1"/>
</dbReference>
<comment type="function">
    <text evidence="1">eIF-2 functions in the early steps of protein synthesis by forming a ternary complex with GTP and initiator tRNA.</text>
</comment>
<comment type="subunit">
    <text evidence="1">Heterotrimer composed of an alpha, a beta and a gamma chain.</text>
</comment>
<comment type="similarity">
    <text evidence="1">Belongs to the eIF-2-alpha family.</text>
</comment>
<gene>
    <name evidence="1" type="primary">eif2a</name>
    <name type="ordered locus">STK_09410</name>
</gene>